<dbReference type="EMBL" id="CP000247">
    <property type="protein sequence ID" value="ABG69085.1"/>
    <property type="molecule type" value="Genomic_DNA"/>
</dbReference>
<dbReference type="RefSeq" id="WP_000589300.1">
    <property type="nucleotide sequence ID" value="NC_008253.1"/>
</dbReference>
<dbReference type="SMR" id="Q0TIZ4"/>
<dbReference type="KEGG" id="ecp:ECP_1072"/>
<dbReference type="HOGENOM" id="CLU_045235_1_0_6"/>
<dbReference type="Proteomes" id="UP000009182">
    <property type="component" value="Chromosome"/>
</dbReference>
<dbReference type="GO" id="GO:0009428">
    <property type="term" value="C:bacterial-type flagellum basal body, distal rod, P ring"/>
    <property type="evidence" value="ECO:0007669"/>
    <property type="project" value="InterPro"/>
</dbReference>
<dbReference type="GO" id="GO:0030288">
    <property type="term" value="C:outer membrane-bounded periplasmic space"/>
    <property type="evidence" value="ECO:0007669"/>
    <property type="project" value="InterPro"/>
</dbReference>
<dbReference type="GO" id="GO:0005198">
    <property type="term" value="F:structural molecule activity"/>
    <property type="evidence" value="ECO:0007669"/>
    <property type="project" value="InterPro"/>
</dbReference>
<dbReference type="GO" id="GO:0071973">
    <property type="term" value="P:bacterial-type flagellum-dependent cell motility"/>
    <property type="evidence" value="ECO:0007669"/>
    <property type="project" value="InterPro"/>
</dbReference>
<dbReference type="HAMAP" id="MF_00416">
    <property type="entry name" value="FlgI"/>
    <property type="match status" value="1"/>
</dbReference>
<dbReference type="InterPro" id="IPR001782">
    <property type="entry name" value="Flag_FlgI"/>
</dbReference>
<dbReference type="NCBIfam" id="NF003676">
    <property type="entry name" value="PRK05303.1"/>
    <property type="match status" value="1"/>
</dbReference>
<dbReference type="PANTHER" id="PTHR30381">
    <property type="entry name" value="FLAGELLAR P-RING PERIPLASMIC PROTEIN FLGI"/>
    <property type="match status" value="1"/>
</dbReference>
<dbReference type="PANTHER" id="PTHR30381:SF0">
    <property type="entry name" value="FLAGELLAR P-RING PROTEIN"/>
    <property type="match status" value="1"/>
</dbReference>
<dbReference type="Pfam" id="PF02119">
    <property type="entry name" value="FlgI"/>
    <property type="match status" value="1"/>
</dbReference>
<dbReference type="PRINTS" id="PR01010">
    <property type="entry name" value="FLGPRINGFLGI"/>
</dbReference>
<organism>
    <name type="scientific">Escherichia coli O6:K15:H31 (strain 536 / UPEC)</name>
    <dbReference type="NCBI Taxonomy" id="362663"/>
    <lineage>
        <taxon>Bacteria</taxon>
        <taxon>Pseudomonadati</taxon>
        <taxon>Pseudomonadota</taxon>
        <taxon>Gammaproteobacteria</taxon>
        <taxon>Enterobacterales</taxon>
        <taxon>Enterobacteriaceae</taxon>
        <taxon>Escherichia</taxon>
    </lineage>
</organism>
<keyword id="KW-0975">Bacterial flagellum</keyword>
<keyword id="KW-0574">Periplasm</keyword>
<keyword id="KW-0732">Signal</keyword>
<protein>
    <recommendedName>
        <fullName evidence="1">Flagellar P-ring protein</fullName>
    </recommendedName>
    <alternativeName>
        <fullName evidence="1">Basal body P-ring protein</fullName>
    </alternativeName>
</protein>
<comment type="function">
    <text evidence="1">Assembles around the rod to form the L-ring and probably protects the motor/basal body from shearing forces during rotation.</text>
</comment>
<comment type="subunit">
    <text evidence="1">The basal body constitutes a major portion of the flagellar organelle and consists of four rings (L,P,S, and M) mounted on a central rod.</text>
</comment>
<comment type="subcellular location">
    <subcellularLocation>
        <location evidence="1">Periplasm</location>
    </subcellularLocation>
    <subcellularLocation>
        <location evidence="1">Bacterial flagellum basal body</location>
    </subcellularLocation>
</comment>
<comment type="similarity">
    <text evidence="1">Belongs to the FlgI family.</text>
</comment>
<proteinExistence type="inferred from homology"/>
<reference key="1">
    <citation type="journal article" date="2006" name="Mol. Microbiol.">
        <title>Role of pathogenicity island-associated integrases in the genome plasticity of uropathogenic Escherichia coli strain 536.</title>
        <authorList>
            <person name="Hochhut B."/>
            <person name="Wilde C."/>
            <person name="Balling G."/>
            <person name="Middendorf B."/>
            <person name="Dobrindt U."/>
            <person name="Brzuszkiewicz E."/>
            <person name="Gottschalk G."/>
            <person name="Carniel E."/>
            <person name="Hacker J."/>
        </authorList>
    </citation>
    <scope>NUCLEOTIDE SEQUENCE [LARGE SCALE GENOMIC DNA]</scope>
    <source>
        <strain>536 / UPEC</strain>
    </source>
</reference>
<feature type="signal peptide" evidence="1">
    <location>
        <begin position="1"/>
        <end position="19"/>
    </location>
</feature>
<feature type="chain" id="PRO_1000050109" description="Flagellar P-ring protein">
    <location>
        <begin position="20"/>
        <end position="365"/>
    </location>
</feature>
<sequence length="365" mass="38182">MIKFLSALILLLVITAAQAERIRDLTSVQGVRQNSLIGYGLVVGLDGTGDQTTQTPFTTQTLNNMLSQLGITVPTGTNMQLKNVAAVMVTASLPPFGRQGQTIDVVVSSMGNAKSLRGGTLLMTPLKGVDSQVYALAQGNILVGGAGASAGGSSVQVNQLNGGRITNGAVIERELPSQFGVGNTLNLQLNDEDFSMAQQIADTINRVRGYGSATALDARTIQVRVPSGNSSQVRFLADIQNMQVNVTPQDAKVVINSRTGSVVMNREVTLDSCAVAQGNLSVTVNRQANVSQPDTPFGGGQTVVTPQTQIDLRQSGGSLQSVRSSASLNNVVRALNALGATPMDLMSILQSMQSAGCLRAKLEII</sequence>
<accession>Q0TIZ4</accession>
<name>FLGI_ECOL5</name>
<gene>
    <name evidence="1" type="primary">flgI</name>
    <name type="ordered locus">ECP_1072</name>
</gene>
<evidence type="ECO:0000255" key="1">
    <source>
        <dbReference type="HAMAP-Rule" id="MF_00416"/>
    </source>
</evidence>